<keyword id="KW-1185">Reference proteome</keyword>
<keyword id="KW-0687">Ribonucleoprotein</keyword>
<keyword id="KW-0689">Ribosomal protein</keyword>
<keyword id="KW-0694">RNA-binding</keyword>
<keyword id="KW-0699">rRNA-binding</keyword>
<reference key="1">
    <citation type="journal article" date="2001" name="Proc. Natl. Acad. Sci. U.S.A.">
        <title>Complete genomic sequence of Pasteurella multocida Pm70.</title>
        <authorList>
            <person name="May B.J."/>
            <person name="Zhang Q."/>
            <person name="Li L.L."/>
            <person name="Paustian M.L."/>
            <person name="Whittam T.S."/>
            <person name="Kapur V."/>
        </authorList>
    </citation>
    <scope>NUCLEOTIDE SEQUENCE [LARGE SCALE GENOMIC DNA]</scope>
    <source>
        <strain>Pm70</strain>
    </source>
</reference>
<name>RL20_PASMU</name>
<comment type="function">
    <text evidence="1">Binds directly to 23S ribosomal RNA and is necessary for the in vitro assembly process of the 50S ribosomal subunit. It is not involved in the protein synthesizing functions of that subunit.</text>
</comment>
<comment type="similarity">
    <text evidence="1">Belongs to the bacterial ribosomal protein bL20 family.</text>
</comment>
<accession>Q9CN41</accession>
<organism>
    <name type="scientific">Pasteurella multocida (strain Pm70)</name>
    <dbReference type="NCBI Taxonomy" id="272843"/>
    <lineage>
        <taxon>Bacteria</taxon>
        <taxon>Pseudomonadati</taxon>
        <taxon>Pseudomonadota</taxon>
        <taxon>Gammaproteobacteria</taxon>
        <taxon>Pasteurellales</taxon>
        <taxon>Pasteurellaceae</taxon>
        <taxon>Pasteurella</taxon>
    </lineage>
</organism>
<dbReference type="EMBL" id="AE004439">
    <property type="protein sequence ID" value="AAK02688.1"/>
    <property type="molecule type" value="Genomic_DNA"/>
</dbReference>
<dbReference type="RefSeq" id="WP_005722169.1">
    <property type="nucleotide sequence ID" value="NC_002663.1"/>
</dbReference>
<dbReference type="SMR" id="Q9CN41"/>
<dbReference type="STRING" id="272843.PM0604"/>
<dbReference type="EnsemblBacteria" id="AAK02688">
    <property type="protein sequence ID" value="AAK02688"/>
    <property type="gene ID" value="PM0604"/>
</dbReference>
<dbReference type="GeneID" id="77208048"/>
<dbReference type="KEGG" id="pmu:PM0604"/>
<dbReference type="HOGENOM" id="CLU_123265_0_1_6"/>
<dbReference type="OrthoDB" id="9808966at2"/>
<dbReference type="Proteomes" id="UP000000809">
    <property type="component" value="Chromosome"/>
</dbReference>
<dbReference type="GO" id="GO:1990904">
    <property type="term" value="C:ribonucleoprotein complex"/>
    <property type="evidence" value="ECO:0007669"/>
    <property type="project" value="UniProtKB-KW"/>
</dbReference>
<dbReference type="GO" id="GO:0005840">
    <property type="term" value="C:ribosome"/>
    <property type="evidence" value="ECO:0007669"/>
    <property type="project" value="UniProtKB-KW"/>
</dbReference>
<dbReference type="GO" id="GO:0019843">
    <property type="term" value="F:rRNA binding"/>
    <property type="evidence" value="ECO:0007669"/>
    <property type="project" value="UniProtKB-UniRule"/>
</dbReference>
<dbReference type="GO" id="GO:0003735">
    <property type="term" value="F:structural constituent of ribosome"/>
    <property type="evidence" value="ECO:0007669"/>
    <property type="project" value="InterPro"/>
</dbReference>
<dbReference type="GO" id="GO:0000027">
    <property type="term" value="P:ribosomal large subunit assembly"/>
    <property type="evidence" value="ECO:0007669"/>
    <property type="project" value="UniProtKB-UniRule"/>
</dbReference>
<dbReference type="GO" id="GO:0006412">
    <property type="term" value="P:translation"/>
    <property type="evidence" value="ECO:0007669"/>
    <property type="project" value="InterPro"/>
</dbReference>
<dbReference type="CDD" id="cd07026">
    <property type="entry name" value="Ribosomal_L20"/>
    <property type="match status" value="1"/>
</dbReference>
<dbReference type="FunFam" id="1.10.1900.20:FF:000001">
    <property type="entry name" value="50S ribosomal protein L20"/>
    <property type="match status" value="1"/>
</dbReference>
<dbReference type="Gene3D" id="6.10.160.10">
    <property type="match status" value="1"/>
</dbReference>
<dbReference type="Gene3D" id="1.10.1900.20">
    <property type="entry name" value="Ribosomal protein L20"/>
    <property type="match status" value="1"/>
</dbReference>
<dbReference type="HAMAP" id="MF_00382">
    <property type="entry name" value="Ribosomal_bL20"/>
    <property type="match status" value="1"/>
</dbReference>
<dbReference type="InterPro" id="IPR005813">
    <property type="entry name" value="Ribosomal_bL20"/>
</dbReference>
<dbReference type="InterPro" id="IPR049946">
    <property type="entry name" value="RIBOSOMAL_L20_CS"/>
</dbReference>
<dbReference type="InterPro" id="IPR035566">
    <property type="entry name" value="Ribosomal_protein_bL20_C"/>
</dbReference>
<dbReference type="NCBIfam" id="TIGR01032">
    <property type="entry name" value="rplT_bact"/>
    <property type="match status" value="1"/>
</dbReference>
<dbReference type="PANTHER" id="PTHR10986">
    <property type="entry name" value="39S RIBOSOMAL PROTEIN L20"/>
    <property type="match status" value="1"/>
</dbReference>
<dbReference type="Pfam" id="PF00453">
    <property type="entry name" value="Ribosomal_L20"/>
    <property type="match status" value="1"/>
</dbReference>
<dbReference type="PRINTS" id="PR00062">
    <property type="entry name" value="RIBOSOMALL20"/>
</dbReference>
<dbReference type="SUPFAM" id="SSF74731">
    <property type="entry name" value="Ribosomal protein L20"/>
    <property type="match status" value="1"/>
</dbReference>
<dbReference type="PROSITE" id="PS00937">
    <property type="entry name" value="RIBOSOMAL_L20"/>
    <property type="match status" value="1"/>
</dbReference>
<evidence type="ECO:0000255" key="1">
    <source>
        <dbReference type="HAMAP-Rule" id="MF_00382"/>
    </source>
</evidence>
<evidence type="ECO:0000305" key="2"/>
<feature type="chain" id="PRO_0000177198" description="Large ribosomal subunit protein bL20">
    <location>
        <begin position="1"/>
        <end position="117"/>
    </location>
</feature>
<proteinExistence type="inferred from homology"/>
<sequence>MARVKRGVIARARHKKVLKAAKGYYGARSRVYRVAFQAVIKAGQYAYRDRRQRKRQFRQLWIARINAAARQNGLSYSKFINGLKKASVEIDRKILADIAVFDKVAFTALVEKAKSAL</sequence>
<protein>
    <recommendedName>
        <fullName evidence="1">Large ribosomal subunit protein bL20</fullName>
    </recommendedName>
    <alternativeName>
        <fullName evidence="2">50S ribosomal protein L20</fullName>
    </alternativeName>
</protein>
<gene>
    <name evidence="1" type="primary">rplT</name>
    <name evidence="1" type="synonym">rpl20</name>
    <name type="ordered locus">PM0604</name>
</gene>